<name>KDPA_FRATW</name>
<keyword id="KW-0997">Cell inner membrane</keyword>
<keyword id="KW-1003">Cell membrane</keyword>
<keyword id="KW-0406">Ion transport</keyword>
<keyword id="KW-0472">Membrane</keyword>
<keyword id="KW-0630">Potassium</keyword>
<keyword id="KW-0633">Potassium transport</keyword>
<keyword id="KW-0812">Transmembrane</keyword>
<keyword id="KW-1133">Transmembrane helix</keyword>
<keyword id="KW-0813">Transport</keyword>
<reference key="1">
    <citation type="journal article" date="2007" name="PLoS ONE">
        <title>Complete genomic characterization of a pathogenic A.II strain of Francisella tularensis subspecies tularensis.</title>
        <authorList>
            <person name="Beckstrom-Sternberg S.M."/>
            <person name="Auerbach R.K."/>
            <person name="Godbole S."/>
            <person name="Pearson J.V."/>
            <person name="Beckstrom-Sternberg J.S."/>
            <person name="Deng Z."/>
            <person name="Munk C."/>
            <person name="Kubota K."/>
            <person name="Zhou Y."/>
            <person name="Bruce D."/>
            <person name="Noronha J."/>
            <person name="Scheuermann R.H."/>
            <person name="Wang A."/>
            <person name="Wei X."/>
            <person name="Wang J."/>
            <person name="Hao J."/>
            <person name="Wagner D.M."/>
            <person name="Brettin T.S."/>
            <person name="Brown N."/>
            <person name="Gilna P."/>
            <person name="Keim P.S."/>
        </authorList>
    </citation>
    <scope>NUCLEOTIDE SEQUENCE [LARGE SCALE GENOMIC DNA]</scope>
    <source>
        <strain>WY96-3418</strain>
    </source>
</reference>
<organism>
    <name type="scientific">Francisella tularensis subsp. tularensis (strain WY96-3418)</name>
    <dbReference type="NCBI Taxonomy" id="418136"/>
    <lineage>
        <taxon>Bacteria</taxon>
        <taxon>Pseudomonadati</taxon>
        <taxon>Pseudomonadota</taxon>
        <taxon>Gammaproteobacteria</taxon>
        <taxon>Thiotrichales</taxon>
        <taxon>Francisellaceae</taxon>
        <taxon>Francisella</taxon>
    </lineage>
</organism>
<protein>
    <recommendedName>
        <fullName evidence="1">Potassium-transporting ATPase potassium-binding subunit</fullName>
    </recommendedName>
    <alternativeName>
        <fullName evidence="1">ATP phosphohydrolase [potassium-transporting] A chain</fullName>
    </alternativeName>
    <alternativeName>
        <fullName evidence="1">Potassium-binding and translocating subunit A</fullName>
    </alternativeName>
    <alternativeName>
        <fullName evidence="1">Potassium-translocating ATPase A chain</fullName>
    </alternativeName>
</protein>
<accession>A4IVV7</accession>
<evidence type="ECO:0000255" key="1">
    <source>
        <dbReference type="HAMAP-Rule" id="MF_00275"/>
    </source>
</evidence>
<comment type="function">
    <text evidence="1">Part of the high-affinity ATP-driven potassium transport (or Kdp) system, which catalyzes the hydrolysis of ATP coupled with the electrogenic transport of potassium into the cytoplasm. This subunit binds the periplasmic potassium ions and delivers the ions to the membrane domain of KdpB through an intramembrane tunnel.</text>
</comment>
<comment type="subunit">
    <text evidence="1">The system is composed of three essential subunits: KdpA, KdpB and KdpC.</text>
</comment>
<comment type="subcellular location">
    <subcellularLocation>
        <location evidence="1">Cell inner membrane</location>
        <topology evidence="1">Multi-pass membrane protein</topology>
    </subcellularLocation>
</comment>
<comment type="similarity">
    <text evidence="1">Belongs to the KdpA family.</text>
</comment>
<sequence>MISNFILFALFIVTIALITKPLGSYIFRVFNNERTYLDWLAKPFQRVYLLVLGESSKKEQTAKAYFFSLVSFSVMAFIFVLVILLLQGILPLNPQEIKGMSFPQALNTAVSFITNTNWQSYSGETGVSYFAQMLALAVQNFVSAAVGLCVAIALIRSVARHETATIGNFWNDLGKGVFWILLPISIVIAIVYIFQGVPQNVMAYLHVHTLAGTEQIIPQGPIASQEAIKSLGTNGGGFFNANSAHPYENPTVITNYIQMVSIFAIAAALTYTFGKWVGNTKQGWLIFGVMLVLFIISLVVMTISELHGLDFLHSKDIQDIYGQVGHLSNMEGKESRFGVFYSTLYNTVSTSASDGGVNSVLDSYSPLAGMMAMLNMAIGEVIFGGVGAGFYGFFMFLMLAVFIGSLMIGRAPSFLGKRIEANDMKWTMFALLISLCCVLVFTGLAAVIPSVHQTLTNSGAHGFSEILYAYISGANNNGSAFAGLSANTNYLNITIALSMLIGRFGVIFAVIMLAGSLVKKKRSLQMSEISSLDTTSFIFAILVFFTILLIGGLTIFPALGLGPILDQLNLNFL</sequence>
<dbReference type="EMBL" id="CP000608">
    <property type="protein sequence ID" value="ABO46059.1"/>
    <property type="molecule type" value="Genomic_DNA"/>
</dbReference>
<dbReference type="RefSeq" id="WP_003024458.1">
    <property type="nucleotide sequence ID" value="NC_009257.1"/>
</dbReference>
<dbReference type="SMR" id="A4IVV7"/>
<dbReference type="KEGG" id="ftw:FTW_0059"/>
<dbReference type="HOGENOM" id="CLU_018614_3_0_6"/>
<dbReference type="GO" id="GO:0005886">
    <property type="term" value="C:plasma membrane"/>
    <property type="evidence" value="ECO:0007669"/>
    <property type="project" value="UniProtKB-SubCell"/>
</dbReference>
<dbReference type="GO" id="GO:0008556">
    <property type="term" value="F:P-type potassium transmembrane transporter activity"/>
    <property type="evidence" value="ECO:0007669"/>
    <property type="project" value="InterPro"/>
</dbReference>
<dbReference type="GO" id="GO:0030955">
    <property type="term" value="F:potassium ion binding"/>
    <property type="evidence" value="ECO:0007669"/>
    <property type="project" value="UniProtKB-UniRule"/>
</dbReference>
<dbReference type="HAMAP" id="MF_00275">
    <property type="entry name" value="KdpA"/>
    <property type="match status" value="1"/>
</dbReference>
<dbReference type="InterPro" id="IPR004623">
    <property type="entry name" value="KdpA"/>
</dbReference>
<dbReference type="NCBIfam" id="TIGR00680">
    <property type="entry name" value="kdpA"/>
    <property type="match status" value="1"/>
</dbReference>
<dbReference type="PANTHER" id="PTHR30607">
    <property type="entry name" value="POTASSIUM-TRANSPORTING ATPASE A CHAIN"/>
    <property type="match status" value="1"/>
</dbReference>
<dbReference type="PANTHER" id="PTHR30607:SF2">
    <property type="entry name" value="POTASSIUM-TRANSPORTING ATPASE POTASSIUM-BINDING SUBUNIT"/>
    <property type="match status" value="1"/>
</dbReference>
<dbReference type="Pfam" id="PF03814">
    <property type="entry name" value="KdpA"/>
    <property type="match status" value="1"/>
</dbReference>
<dbReference type="PIRSF" id="PIRSF001294">
    <property type="entry name" value="K_ATPaseA"/>
    <property type="match status" value="1"/>
</dbReference>
<proteinExistence type="inferred from homology"/>
<feature type="chain" id="PRO_1000119347" description="Potassium-transporting ATPase potassium-binding subunit">
    <location>
        <begin position="1"/>
        <end position="573"/>
    </location>
</feature>
<feature type="transmembrane region" description="Helical" evidence="1">
    <location>
        <begin position="6"/>
        <end position="26"/>
    </location>
</feature>
<feature type="transmembrane region" description="Helical" evidence="1">
    <location>
        <begin position="66"/>
        <end position="86"/>
    </location>
</feature>
<feature type="transmembrane region" description="Helical" evidence="1">
    <location>
        <begin position="135"/>
        <end position="155"/>
    </location>
</feature>
<feature type="transmembrane region" description="Helical" evidence="1">
    <location>
        <begin position="177"/>
        <end position="197"/>
    </location>
</feature>
<feature type="transmembrane region" description="Helical" evidence="1">
    <location>
        <begin position="257"/>
        <end position="277"/>
    </location>
</feature>
<feature type="transmembrane region" description="Helical" evidence="1">
    <location>
        <begin position="283"/>
        <end position="303"/>
    </location>
</feature>
<feature type="transmembrane region" description="Helical" evidence="1">
    <location>
        <begin position="382"/>
        <end position="402"/>
    </location>
</feature>
<feature type="transmembrane region" description="Helical" evidence="1">
    <location>
        <begin position="428"/>
        <end position="448"/>
    </location>
</feature>
<feature type="transmembrane region" description="Helical" evidence="1">
    <location>
        <begin position="493"/>
        <end position="513"/>
    </location>
</feature>
<feature type="transmembrane region" description="Helical" evidence="1">
    <location>
        <begin position="537"/>
        <end position="557"/>
    </location>
</feature>
<gene>
    <name evidence="1" type="primary">kdpA</name>
    <name type="ordered locus">FTW_0059</name>
</gene>